<sequence length="207" mass="23268">MYVMKQNGWVELICGSMFSGKSEELIRRVRRATYAHINVRVYKPAIDDRYDDKAIVSHDGTSTMARPIHDAVEILEDVDNNVEIVGIDEVQFFDNNVVDVIEELADRGIRVIVAGLDLDFRGEPFEPVPKIMALAESVTKLNAICPICGSPASRTQRLIDGKPASYNDPIILVGASESYEPRCRHHHEVPFRPENNFATKSWDALKS</sequence>
<organism>
    <name type="scientific">Oceanobacillus iheyensis (strain DSM 14371 / CIP 107618 / JCM 11309 / KCTC 3954 / HTE831)</name>
    <dbReference type="NCBI Taxonomy" id="221109"/>
    <lineage>
        <taxon>Bacteria</taxon>
        <taxon>Bacillati</taxon>
        <taxon>Bacillota</taxon>
        <taxon>Bacilli</taxon>
        <taxon>Bacillales</taxon>
        <taxon>Bacillaceae</taxon>
        <taxon>Oceanobacillus</taxon>
    </lineage>
</organism>
<accession>Q8EM59</accession>
<name>KITH_OCEIH</name>
<gene>
    <name evidence="1" type="primary">tdk</name>
    <name type="ordered locus">OB2999</name>
</gene>
<evidence type="ECO:0000255" key="1">
    <source>
        <dbReference type="HAMAP-Rule" id="MF_00124"/>
    </source>
</evidence>
<reference key="1">
    <citation type="journal article" date="2002" name="Nucleic Acids Res.">
        <title>Genome sequence of Oceanobacillus iheyensis isolated from the Iheya Ridge and its unexpected adaptive capabilities to extreme environments.</title>
        <authorList>
            <person name="Takami H."/>
            <person name="Takaki Y."/>
            <person name="Uchiyama I."/>
        </authorList>
    </citation>
    <scope>NUCLEOTIDE SEQUENCE [LARGE SCALE GENOMIC DNA]</scope>
    <source>
        <strain>DSM 14371 / CIP 107618 / JCM 11309 / KCTC 3954 / HTE831</strain>
    </source>
</reference>
<proteinExistence type="inferred from homology"/>
<dbReference type="EC" id="2.7.1.21" evidence="1"/>
<dbReference type="EMBL" id="BA000028">
    <property type="protein sequence ID" value="BAC14955.1"/>
    <property type="molecule type" value="Genomic_DNA"/>
</dbReference>
<dbReference type="RefSeq" id="WP_011067395.1">
    <property type="nucleotide sequence ID" value="NC_004193.1"/>
</dbReference>
<dbReference type="SMR" id="Q8EM59"/>
<dbReference type="STRING" id="221109.gene:10735251"/>
<dbReference type="KEGG" id="oih:OB2999"/>
<dbReference type="eggNOG" id="COG1435">
    <property type="taxonomic scope" value="Bacteria"/>
</dbReference>
<dbReference type="HOGENOM" id="CLU_064400_3_0_9"/>
<dbReference type="OrthoDB" id="9781579at2"/>
<dbReference type="PhylomeDB" id="Q8EM59"/>
<dbReference type="Proteomes" id="UP000000822">
    <property type="component" value="Chromosome"/>
</dbReference>
<dbReference type="GO" id="GO:0005829">
    <property type="term" value="C:cytosol"/>
    <property type="evidence" value="ECO:0007669"/>
    <property type="project" value="TreeGrafter"/>
</dbReference>
<dbReference type="GO" id="GO:0005524">
    <property type="term" value="F:ATP binding"/>
    <property type="evidence" value="ECO:0007669"/>
    <property type="project" value="UniProtKB-UniRule"/>
</dbReference>
<dbReference type="GO" id="GO:0004797">
    <property type="term" value="F:thymidine kinase activity"/>
    <property type="evidence" value="ECO:0007669"/>
    <property type="project" value="UniProtKB-UniRule"/>
</dbReference>
<dbReference type="GO" id="GO:0008270">
    <property type="term" value="F:zinc ion binding"/>
    <property type="evidence" value="ECO:0007669"/>
    <property type="project" value="UniProtKB-UniRule"/>
</dbReference>
<dbReference type="GO" id="GO:0071897">
    <property type="term" value="P:DNA biosynthetic process"/>
    <property type="evidence" value="ECO:0007669"/>
    <property type="project" value="UniProtKB-KW"/>
</dbReference>
<dbReference type="GO" id="GO:0046104">
    <property type="term" value="P:thymidine metabolic process"/>
    <property type="evidence" value="ECO:0007669"/>
    <property type="project" value="TreeGrafter"/>
</dbReference>
<dbReference type="FunFam" id="3.30.60.20:FF:000026">
    <property type="entry name" value="Thymidine kinase"/>
    <property type="match status" value="1"/>
</dbReference>
<dbReference type="FunFam" id="3.40.50.300:FF:000384">
    <property type="entry name" value="Thymidine kinase"/>
    <property type="match status" value="1"/>
</dbReference>
<dbReference type="Gene3D" id="3.30.60.20">
    <property type="match status" value="1"/>
</dbReference>
<dbReference type="Gene3D" id="3.40.50.300">
    <property type="entry name" value="P-loop containing nucleotide triphosphate hydrolases"/>
    <property type="match status" value="1"/>
</dbReference>
<dbReference type="HAMAP" id="MF_00124">
    <property type="entry name" value="Thymidine_kinase"/>
    <property type="match status" value="1"/>
</dbReference>
<dbReference type="InterPro" id="IPR027417">
    <property type="entry name" value="P-loop_NTPase"/>
</dbReference>
<dbReference type="InterPro" id="IPR001267">
    <property type="entry name" value="Thymidine_kinase"/>
</dbReference>
<dbReference type="InterPro" id="IPR020633">
    <property type="entry name" value="Thymidine_kinase_CS"/>
</dbReference>
<dbReference type="NCBIfam" id="NF003296">
    <property type="entry name" value="PRK04296.1-1"/>
    <property type="match status" value="1"/>
</dbReference>
<dbReference type="PANTHER" id="PTHR11441">
    <property type="entry name" value="THYMIDINE KINASE"/>
    <property type="match status" value="1"/>
</dbReference>
<dbReference type="PANTHER" id="PTHR11441:SF0">
    <property type="entry name" value="THYMIDINE KINASE, CYTOSOLIC"/>
    <property type="match status" value="1"/>
</dbReference>
<dbReference type="Pfam" id="PF00265">
    <property type="entry name" value="TK"/>
    <property type="match status" value="1"/>
</dbReference>
<dbReference type="PIRSF" id="PIRSF035805">
    <property type="entry name" value="TK_cell"/>
    <property type="match status" value="1"/>
</dbReference>
<dbReference type="SUPFAM" id="SSF57716">
    <property type="entry name" value="Glucocorticoid receptor-like (DNA-binding domain)"/>
    <property type="match status" value="1"/>
</dbReference>
<dbReference type="SUPFAM" id="SSF52540">
    <property type="entry name" value="P-loop containing nucleoside triphosphate hydrolases"/>
    <property type="match status" value="1"/>
</dbReference>
<dbReference type="PROSITE" id="PS00603">
    <property type="entry name" value="TK_CELLULAR_TYPE"/>
    <property type="match status" value="1"/>
</dbReference>
<feature type="chain" id="PRO_0000175000" description="Thymidine kinase">
    <location>
        <begin position="1"/>
        <end position="207"/>
    </location>
</feature>
<feature type="active site" description="Proton acceptor" evidence="1">
    <location>
        <position position="89"/>
    </location>
</feature>
<feature type="binding site" evidence="1">
    <location>
        <begin position="15"/>
        <end position="22"/>
    </location>
    <ligand>
        <name>ATP</name>
        <dbReference type="ChEBI" id="CHEBI:30616"/>
    </ligand>
</feature>
<feature type="binding site" evidence="1">
    <location>
        <begin position="88"/>
        <end position="91"/>
    </location>
    <ligand>
        <name>ATP</name>
        <dbReference type="ChEBI" id="CHEBI:30616"/>
    </ligand>
</feature>
<feature type="binding site" evidence="1">
    <location>
        <position position="145"/>
    </location>
    <ligand>
        <name>Zn(2+)</name>
        <dbReference type="ChEBI" id="CHEBI:29105"/>
    </ligand>
</feature>
<feature type="binding site" evidence="1">
    <location>
        <position position="148"/>
    </location>
    <ligand>
        <name>Zn(2+)</name>
        <dbReference type="ChEBI" id="CHEBI:29105"/>
    </ligand>
</feature>
<feature type="binding site" evidence="1">
    <location>
        <position position="183"/>
    </location>
    <ligand>
        <name>Zn(2+)</name>
        <dbReference type="ChEBI" id="CHEBI:29105"/>
    </ligand>
</feature>
<feature type="binding site" evidence="1">
    <location>
        <position position="186"/>
    </location>
    <ligand>
        <name>Zn(2+)</name>
        <dbReference type="ChEBI" id="CHEBI:29105"/>
    </ligand>
</feature>
<comment type="catalytic activity">
    <reaction evidence="1">
        <text>thymidine + ATP = dTMP + ADP + H(+)</text>
        <dbReference type="Rhea" id="RHEA:19129"/>
        <dbReference type="ChEBI" id="CHEBI:15378"/>
        <dbReference type="ChEBI" id="CHEBI:17748"/>
        <dbReference type="ChEBI" id="CHEBI:30616"/>
        <dbReference type="ChEBI" id="CHEBI:63528"/>
        <dbReference type="ChEBI" id="CHEBI:456216"/>
        <dbReference type="EC" id="2.7.1.21"/>
    </reaction>
</comment>
<comment type="subunit">
    <text evidence="1">Homotetramer.</text>
</comment>
<comment type="subcellular location">
    <subcellularLocation>
        <location evidence="1">Cytoplasm</location>
    </subcellularLocation>
</comment>
<comment type="similarity">
    <text evidence="1">Belongs to the thymidine kinase family.</text>
</comment>
<keyword id="KW-0067">ATP-binding</keyword>
<keyword id="KW-0963">Cytoplasm</keyword>
<keyword id="KW-0237">DNA synthesis</keyword>
<keyword id="KW-0418">Kinase</keyword>
<keyword id="KW-0479">Metal-binding</keyword>
<keyword id="KW-0547">Nucleotide-binding</keyword>
<keyword id="KW-1185">Reference proteome</keyword>
<keyword id="KW-0808">Transferase</keyword>
<keyword id="KW-0862">Zinc</keyword>
<protein>
    <recommendedName>
        <fullName evidence="1">Thymidine kinase</fullName>
        <ecNumber evidence="1">2.7.1.21</ecNumber>
    </recommendedName>
</protein>